<protein>
    <recommendedName>
        <fullName evidence="1">Proline--tRNA ligase</fullName>
        <ecNumber evidence="1">6.1.1.15</ecNumber>
    </recommendedName>
    <alternativeName>
        <fullName evidence="1">Prolyl-tRNA synthetase</fullName>
        <shortName evidence="1">ProRS</shortName>
    </alternativeName>
</protein>
<gene>
    <name evidence="1" type="primary">proS</name>
    <name type="ordered locus">ECA3529</name>
</gene>
<accession>Q6D1B9</accession>
<reference key="1">
    <citation type="journal article" date="2004" name="Proc. Natl. Acad. Sci. U.S.A.">
        <title>Genome sequence of the enterobacterial phytopathogen Erwinia carotovora subsp. atroseptica and characterization of virulence factors.</title>
        <authorList>
            <person name="Bell K.S."/>
            <person name="Sebaihia M."/>
            <person name="Pritchard L."/>
            <person name="Holden M.T.G."/>
            <person name="Hyman L.J."/>
            <person name="Holeva M.C."/>
            <person name="Thomson N.R."/>
            <person name="Bentley S.D."/>
            <person name="Churcher L.J.C."/>
            <person name="Mungall K."/>
            <person name="Atkin R."/>
            <person name="Bason N."/>
            <person name="Brooks K."/>
            <person name="Chillingworth T."/>
            <person name="Clark K."/>
            <person name="Doggett J."/>
            <person name="Fraser A."/>
            <person name="Hance Z."/>
            <person name="Hauser H."/>
            <person name="Jagels K."/>
            <person name="Moule S."/>
            <person name="Norbertczak H."/>
            <person name="Ormond D."/>
            <person name="Price C."/>
            <person name="Quail M.A."/>
            <person name="Sanders M."/>
            <person name="Walker D."/>
            <person name="Whitehead S."/>
            <person name="Salmond G.P.C."/>
            <person name="Birch P.R.J."/>
            <person name="Parkhill J."/>
            <person name="Toth I.K."/>
        </authorList>
    </citation>
    <scope>NUCLEOTIDE SEQUENCE [LARGE SCALE GENOMIC DNA]</scope>
    <source>
        <strain>SCRI 1043 / ATCC BAA-672</strain>
    </source>
</reference>
<dbReference type="EC" id="6.1.1.15" evidence="1"/>
<dbReference type="EMBL" id="BX950851">
    <property type="protein sequence ID" value="CAG76427.1"/>
    <property type="molecule type" value="Genomic_DNA"/>
</dbReference>
<dbReference type="RefSeq" id="WP_011095034.1">
    <property type="nucleotide sequence ID" value="NC_004547.2"/>
</dbReference>
<dbReference type="SMR" id="Q6D1B9"/>
<dbReference type="STRING" id="218491.ECA3529"/>
<dbReference type="GeneID" id="57210203"/>
<dbReference type="KEGG" id="eca:ECA3529"/>
<dbReference type="PATRIC" id="fig|218491.5.peg.3575"/>
<dbReference type="eggNOG" id="COG0442">
    <property type="taxonomic scope" value="Bacteria"/>
</dbReference>
<dbReference type="HOGENOM" id="CLU_016739_0_0_6"/>
<dbReference type="OrthoDB" id="9809052at2"/>
<dbReference type="Proteomes" id="UP000007966">
    <property type="component" value="Chromosome"/>
</dbReference>
<dbReference type="GO" id="GO:0005829">
    <property type="term" value="C:cytosol"/>
    <property type="evidence" value="ECO:0007669"/>
    <property type="project" value="TreeGrafter"/>
</dbReference>
<dbReference type="GO" id="GO:0002161">
    <property type="term" value="F:aminoacyl-tRNA deacylase activity"/>
    <property type="evidence" value="ECO:0007669"/>
    <property type="project" value="InterPro"/>
</dbReference>
<dbReference type="GO" id="GO:0005524">
    <property type="term" value="F:ATP binding"/>
    <property type="evidence" value="ECO:0007669"/>
    <property type="project" value="UniProtKB-UniRule"/>
</dbReference>
<dbReference type="GO" id="GO:0004827">
    <property type="term" value="F:proline-tRNA ligase activity"/>
    <property type="evidence" value="ECO:0007669"/>
    <property type="project" value="UniProtKB-UniRule"/>
</dbReference>
<dbReference type="GO" id="GO:0006433">
    <property type="term" value="P:prolyl-tRNA aminoacylation"/>
    <property type="evidence" value="ECO:0007669"/>
    <property type="project" value="UniProtKB-UniRule"/>
</dbReference>
<dbReference type="CDD" id="cd04334">
    <property type="entry name" value="ProRS-INS"/>
    <property type="match status" value="1"/>
</dbReference>
<dbReference type="CDD" id="cd00861">
    <property type="entry name" value="ProRS_anticodon_short"/>
    <property type="match status" value="1"/>
</dbReference>
<dbReference type="CDD" id="cd00779">
    <property type="entry name" value="ProRS_core_prok"/>
    <property type="match status" value="1"/>
</dbReference>
<dbReference type="FunFam" id="3.30.930.10:FF:000012">
    <property type="entry name" value="Proline--tRNA ligase"/>
    <property type="match status" value="1"/>
</dbReference>
<dbReference type="FunFam" id="3.30.930.10:FF:000097">
    <property type="entry name" value="Proline--tRNA ligase"/>
    <property type="match status" value="1"/>
</dbReference>
<dbReference type="FunFam" id="3.40.50.800:FF:000006">
    <property type="entry name" value="Proline--tRNA ligase"/>
    <property type="match status" value="1"/>
</dbReference>
<dbReference type="FunFam" id="3.90.960.10:FF:000001">
    <property type="entry name" value="Proline--tRNA ligase"/>
    <property type="match status" value="1"/>
</dbReference>
<dbReference type="Gene3D" id="3.40.50.800">
    <property type="entry name" value="Anticodon-binding domain"/>
    <property type="match status" value="1"/>
</dbReference>
<dbReference type="Gene3D" id="3.30.930.10">
    <property type="entry name" value="Bira Bifunctional Protein, Domain 2"/>
    <property type="match status" value="2"/>
</dbReference>
<dbReference type="Gene3D" id="3.90.960.10">
    <property type="entry name" value="YbaK/aminoacyl-tRNA synthetase-associated domain"/>
    <property type="match status" value="1"/>
</dbReference>
<dbReference type="HAMAP" id="MF_01569">
    <property type="entry name" value="Pro_tRNA_synth_type1"/>
    <property type="match status" value="1"/>
</dbReference>
<dbReference type="InterPro" id="IPR002314">
    <property type="entry name" value="aa-tRNA-synt_IIb"/>
</dbReference>
<dbReference type="InterPro" id="IPR006195">
    <property type="entry name" value="aa-tRNA-synth_II"/>
</dbReference>
<dbReference type="InterPro" id="IPR045864">
    <property type="entry name" value="aa-tRNA-synth_II/BPL/LPL"/>
</dbReference>
<dbReference type="InterPro" id="IPR004154">
    <property type="entry name" value="Anticodon-bd"/>
</dbReference>
<dbReference type="InterPro" id="IPR036621">
    <property type="entry name" value="Anticodon-bd_dom_sf"/>
</dbReference>
<dbReference type="InterPro" id="IPR002316">
    <property type="entry name" value="Pro-tRNA-ligase_IIa"/>
</dbReference>
<dbReference type="InterPro" id="IPR004500">
    <property type="entry name" value="Pro-tRNA-synth_IIa_bac-type"/>
</dbReference>
<dbReference type="InterPro" id="IPR023717">
    <property type="entry name" value="Pro-tRNA-Synthase_IIa_type1"/>
</dbReference>
<dbReference type="InterPro" id="IPR050062">
    <property type="entry name" value="Pro-tRNA_synthetase"/>
</dbReference>
<dbReference type="InterPro" id="IPR044140">
    <property type="entry name" value="ProRS_anticodon_short"/>
</dbReference>
<dbReference type="InterPro" id="IPR033730">
    <property type="entry name" value="ProRS_core_prok"/>
</dbReference>
<dbReference type="InterPro" id="IPR036754">
    <property type="entry name" value="YbaK/aa-tRNA-synt-asso_dom_sf"/>
</dbReference>
<dbReference type="InterPro" id="IPR007214">
    <property type="entry name" value="YbaK/aa-tRNA-synth-assoc-dom"/>
</dbReference>
<dbReference type="NCBIfam" id="NF006625">
    <property type="entry name" value="PRK09194.1"/>
    <property type="match status" value="1"/>
</dbReference>
<dbReference type="NCBIfam" id="TIGR00409">
    <property type="entry name" value="proS_fam_II"/>
    <property type="match status" value="1"/>
</dbReference>
<dbReference type="PANTHER" id="PTHR42753">
    <property type="entry name" value="MITOCHONDRIAL RIBOSOME PROTEIN L39/PROLYL-TRNA LIGASE FAMILY MEMBER"/>
    <property type="match status" value="1"/>
</dbReference>
<dbReference type="PANTHER" id="PTHR42753:SF2">
    <property type="entry name" value="PROLINE--TRNA LIGASE"/>
    <property type="match status" value="1"/>
</dbReference>
<dbReference type="Pfam" id="PF03129">
    <property type="entry name" value="HGTP_anticodon"/>
    <property type="match status" value="1"/>
</dbReference>
<dbReference type="Pfam" id="PF00587">
    <property type="entry name" value="tRNA-synt_2b"/>
    <property type="match status" value="1"/>
</dbReference>
<dbReference type="Pfam" id="PF04073">
    <property type="entry name" value="tRNA_edit"/>
    <property type="match status" value="1"/>
</dbReference>
<dbReference type="PIRSF" id="PIRSF001535">
    <property type="entry name" value="ProRS_1"/>
    <property type="match status" value="1"/>
</dbReference>
<dbReference type="PRINTS" id="PR01046">
    <property type="entry name" value="TRNASYNTHPRO"/>
</dbReference>
<dbReference type="SUPFAM" id="SSF52954">
    <property type="entry name" value="Class II aaRS ABD-related"/>
    <property type="match status" value="1"/>
</dbReference>
<dbReference type="SUPFAM" id="SSF55681">
    <property type="entry name" value="Class II aaRS and biotin synthetases"/>
    <property type="match status" value="1"/>
</dbReference>
<dbReference type="SUPFAM" id="SSF55826">
    <property type="entry name" value="YbaK/ProRS associated domain"/>
    <property type="match status" value="1"/>
</dbReference>
<dbReference type="PROSITE" id="PS50862">
    <property type="entry name" value="AA_TRNA_LIGASE_II"/>
    <property type="match status" value="1"/>
</dbReference>
<organism>
    <name type="scientific">Pectobacterium atrosepticum (strain SCRI 1043 / ATCC BAA-672)</name>
    <name type="common">Erwinia carotovora subsp. atroseptica</name>
    <dbReference type="NCBI Taxonomy" id="218491"/>
    <lineage>
        <taxon>Bacteria</taxon>
        <taxon>Pseudomonadati</taxon>
        <taxon>Pseudomonadota</taxon>
        <taxon>Gammaproteobacteria</taxon>
        <taxon>Enterobacterales</taxon>
        <taxon>Pectobacteriaceae</taxon>
        <taxon>Pectobacterium</taxon>
    </lineage>
</organism>
<sequence length="572" mass="63802">MRTSQYMLSTLKETPADAEVISHQLMLRAGMIRKLASGLYTWLPTGLRVLRKVENIVREEMNNAGAIEVSMPVVQPADLWVESGRWDQYGPELLRFVDRGERPFVLGPTHEEVITDLIRNEVSSYKQLPLNFFQIQTKFRDEVRPRFGVMRSREFLMKDAYSFHTSQESLQATYDTMYAAYSKIFSRMDLDFRAVQADTGSIGGNASHEFQVLASSGEDDIVFSTESDYAANIELAEAVAPKLGRAEAKEELRLIDTPNAKTIAELVEQFKLPVEKTVKTLLVKATEESGHQLVALLVRGDHELNEIKAEKIAQVASPLTFATEEEIRAIIGAGPGSLGPVKLDIPVVVDRTVAAMSDFSAGANIDGKHYFGINWVRDVALPQVADIRNVVEGDISPDGKGTLQIKRGIEVGHIFQLGSKYSEALKATVQGEDGRNQTLTMGCYGIGVTRVVAAAIEQNNDERGIIWPDAIAPFHVAILPMNMHKSFRVKEVAEDIYQQLRAKGIEVLLDDRKERPGVMFADMELIGVPHTIVIGDRNLDSEEIEYKNRRVGEKQMIKTSEIIDFLLANIIR</sequence>
<feature type="chain" id="PRO_0000248689" description="Proline--tRNA ligase">
    <location>
        <begin position="1"/>
        <end position="572"/>
    </location>
</feature>
<proteinExistence type="inferred from homology"/>
<comment type="function">
    <text evidence="1">Catalyzes the attachment of proline to tRNA(Pro) in a two-step reaction: proline is first activated by ATP to form Pro-AMP and then transferred to the acceptor end of tRNA(Pro). As ProRS can inadvertently accommodate and process non-cognate amino acids such as alanine and cysteine, to avoid such errors it has two additional distinct editing activities against alanine. One activity is designated as 'pretransfer' editing and involves the tRNA(Pro)-independent hydrolysis of activated Ala-AMP. The other activity is designated 'posttransfer' editing and involves deacylation of mischarged Ala-tRNA(Pro). The misacylated Cys-tRNA(Pro) is not edited by ProRS.</text>
</comment>
<comment type="catalytic activity">
    <reaction evidence="1">
        <text>tRNA(Pro) + L-proline + ATP = L-prolyl-tRNA(Pro) + AMP + diphosphate</text>
        <dbReference type="Rhea" id="RHEA:14305"/>
        <dbReference type="Rhea" id="RHEA-COMP:9700"/>
        <dbReference type="Rhea" id="RHEA-COMP:9702"/>
        <dbReference type="ChEBI" id="CHEBI:30616"/>
        <dbReference type="ChEBI" id="CHEBI:33019"/>
        <dbReference type="ChEBI" id="CHEBI:60039"/>
        <dbReference type="ChEBI" id="CHEBI:78442"/>
        <dbReference type="ChEBI" id="CHEBI:78532"/>
        <dbReference type="ChEBI" id="CHEBI:456215"/>
        <dbReference type="EC" id="6.1.1.15"/>
    </reaction>
</comment>
<comment type="subunit">
    <text evidence="1">Homodimer.</text>
</comment>
<comment type="subcellular location">
    <subcellularLocation>
        <location evidence="1">Cytoplasm</location>
    </subcellularLocation>
</comment>
<comment type="domain">
    <text evidence="1">Consists of three domains: the N-terminal catalytic domain, the editing domain and the C-terminal anticodon-binding domain.</text>
</comment>
<comment type="similarity">
    <text evidence="1">Belongs to the class-II aminoacyl-tRNA synthetase family. ProS type 1 subfamily.</text>
</comment>
<keyword id="KW-0030">Aminoacyl-tRNA synthetase</keyword>
<keyword id="KW-0067">ATP-binding</keyword>
<keyword id="KW-0963">Cytoplasm</keyword>
<keyword id="KW-0436">Ligase</keyword>
<keyword id="KW-0547">Nucleotide-binding</keyword>
<keyword id="KW-0648">Protein biosynthesis</keyword>
<keyword id="KW-1185">Reference proteome</keyword>
<name>SYP_PECAS</name>
<evidence type="ECO:0000255" key="1">
    <source>
        <dbReference type="HAMAP-Rule" id="MF_01569"/>
    </source>
</evidence>